<name>IPT7_ARATH</name>
<protein>
    <recommendedName>
        <fullName>Adenylate isopentenyltransferase 7, mitochondrial</fullName>
        <shortName>AtIPT7</shortName>
        <ecNumber>2.5.1.112</ecNumber>
    </recommendedName>
    <alternativeName>
        <fullName>Adenylate dimethylallyltransferase 7</fullName>
    </alternativeName>
    <alternativeName>
        <fullName>Cytokinin synthase 7</fullName>
    </alternativeName>
</protein>
<organism>
    <name type="scientific">Arabidopsis thaliana</name>
    <name type="common">Mouse-ear cress</name>
    <dbReference type="NCBI Taxonomy" id="3702"/>
    <lineage>
        <taxon>Eukaryota</taxon>
        <taxon>Viridiplantae</taxon>
        <taxon>Streptophyta</taxon>
        <taxon>Embryophyta</taxon>
        <taxon>Tracheophyta</taxon>
        <taxon>Spermatophyta</taxon>
        <taxon>Magnoliopsida</taxon>
        <taxon>eudicotyledons</taxon>
        <taxon>Gunneridae</taxon>
        <taxon>Pentapetalae</taxon>
        <taxon>rosids</taxon>
        <taxon>malvids</taxon>
        <taxon>Brassicales</taxon>
        <taxon>Brassicaceae</taxon>
        <taxon>Camelineae</taxon>
        <taxon>Arabidopsis</taxon>
    </lineage>
</organism>
<gene>
    <name type="primary">IPT7</name>
    <name type="ordered locus">At3g23630</name>
    <name type="ORF">MDB19.12</name>
</gene>
<dbReference type="EC" id="2.5.1.112"/>
<dbReference type="EMBL" id="AB062613">
    <property type="protein sequence ID" value="BAB59046.1"/>
    <property type="molecule type" value="mRNA"/>
</dbReference>
<dbReference type="EMBL" id="AB061405">
    <property type="protein sequence ID" value="BAB59033.1"/>
    <property type="molecule type" value="mRNA"/>
</dbReference>
<dbReference type="EMBL" id="AB023036">
    <property type="protein sequence ID" value="BAB02782.1"/>
    <property type="molecule type" value="Genomic_DNA"/>
</dbReference>
<dbReference type="EMBL" id="CP002686">
    <property type="protein sequence ID" value="AEE76788.1"/>
    <property type="molecule type" value="Genomic_DNA"/>
</dbReference>
<dbReference type="EMBL" id="AY087990">
    <property type="protein sequence ID" value="AAM65536.1"/>
    <property type="molecule type" value="mRNA"/>
</dbReference>
<dbReference type="EMBL" id="AK227296">
    <property type="protein sequence ID" value="BAE99312.1"/>
    <property type="molecule type" value="mRNA"/>
</dbReference>
<dbReference type="RefSeq" id="NP_566735.1">
    <property type="nucleotide sequence ID" value="NM_113267.3"/>
</dbReference>
<dbReference type="SMR" id="Q94ID1"/>
<dbReference type="STRING" id="3702.Q94ID1"/>
<dbReference type="PaxDb" id="3702-AT3G23630.1"/>
<dbReference type="EnsemblPlants" id="AT3G23630.1">
    <property type="protein sequence ID" value="AT3G23630.1"/>
    <property type="gene ID" value="AT3G23630"/>
</dbReference>
<dbReference type="GeneID" id="821943"/>
<dbReference type="Gramene" id="AT3G23630.1">
    <property type="protein sequence ID" value="AT3G23630.1"/>
    <property type="gene ID" value="AT3G23630"/>
</dbReference>
<dbReference type="KEGG" id="ath:AT3G23630"/>
<dbReference type="Araport" id="AT3G23630"/>
<dbReference type="TAIR" id="AT3G23630">
    <property type="gene designation" value="IPT7"/>
</dbReference>
<dbReference type="eggNOG" id="KOG1384">
    <property type="taxonomic scope" value="Eukaryota"/>
</dbReference>
<dbReference type="HOGENOM" id="CLU_032616_4_1_1"/>
<dbReference type="InParanoid" id="Q94ID1"/>
<dbReference type="OMA" id="LNNYDCC"/>
<dbReference type="OrthoDB" id="775260at2759"/>
<dbReference type="PhylomeDB" id="Q94ID1"/>
<dbReference type="BioCyc" id="ARA:AT3G23630-MONOMER"/>
<dbReference type="BioCyc" id="MetaCyc:AT3G23630-MONOMER"/>
<dbReference type="BRENDA" id="2.5.1.112">
    <property type="organism ID" value="399"/>
</dbReference>
<dbReference type="PRO" id="PR:Q94ID1"/>
<dbReference type="Proteomes" id="UP000006548">
    <property type="component" value="Chromosome 3"/>
</dbReference>
<dbReference type="ExpressionAtlas" id="Q94ID1">
    <property type="expression patterns" value="baseline and differential"/>
</dbReference>
<dbReference type="GO" id="GO:0005739">
    <property type="term" value="C:mitochondrion"/>
    <property type="evidence" value="ECO:0000314"/>
    <property type="project" value="UniProtKB"/>
</dbReference>
<dbReference type="GO" id="GO:0009824">
    <property type="term" value="F:AMP dimethylallyltransferase activity"/>
    <property type="evidence" value="ECO:0000315"/>
    <property type="project" value="TAIR"/>
</dbReference>
<dbReference type="GO" id="GO:0005524">
    <property type="term" value="F:ATP binding"/>
    <property type="evidence" value="ECO:0007669"/>
    <property type="project" value="UniProtKB-KW"/>
</dbReference>
<dbReference type="GO" id="GO:0052622">
    <property type="term" value="F:ATP/ADP dimethylallyltransferase activity"/>
    <property type="evidence" value="ECO:0000250"/>
    <property type="project" value="TAIR"/>
</dbReference>
<dbReference type="GO" id="GO:0009691">
    <property type="term" value="P:cytokinin biosynthetic process"/>
    <property type="evidence" value="ECO:0000304"/>
    <property type="project" value="TAIR"/>
</dbReference>
<dbReference type="GO" id="GO:0009860">
    <property type="term" value="P:pollen tube growth"/>
    <property type="evidence" value="ECO:0000270"/>
    <property type="project" value="TAIR"/>
</dbReference>
<dbReference type="FunFam" id="1.10.287.890:FF:000002">
    <property type="entry name" value="Adenylate isopentenyltransferase 5, chloroplastic"/>
    <property type="match status" value="1"/>
</dbReference>
<dbReference type="Gene3D" id="1.10.287.890">
    <property type="entry name" value="Crystal structure of tRNA isopentenylpyrophosphate transferase (bh2366) domain"/>
    <property type="match status" value="1"/>
</dbReference>
<dbReference type="Gene3D" id="3.40.50.300">
    <property type="entry name" value="P-loop containing nucleotide triphosphate hydrolases"/>
    <property type="match status" value="1"/>
</dbReference>
<dbReference type="InterPro" id="IPR039657">
    <property type="entry name" value="Dimethylallyltransferase"/>
</dbReference>
<dbReference type="InterPro" id="IPR027417">
    <property type="entry name" value="P-loop_NTPase"/>
</dbReference>
<dbReference type="PANTHER" id="PTHR11088:SF56">
    <property type="entry name" value="ADENYLATE ISOPENTENYLTRANSFERASE 7, MITOCHONDRIAL"/>
    <property type="match status" value="1"/>
</dbReference>
<dbReference type="PANTHER" id="PTHR11088">
    <property type="entry name" value="TRNA DIMETHYLALLYLTRANSFERASE"/>
    <property type="match status" value="1"/>
</dbReference>
<dbReference type="Pfam" id="PF01715">
    <property type="entry name" value="IPPT"/>
    <property type="match status" value="2"/>
</dbReference>
<dbReference type="SUPFAM" id="SSF52540">
    <property type="entry name" value="P-loop containing nucleoside triphosphate hydrolases"/>
    <property type="match status" value="1"/>
</dbReference>
<keyword id="KW-0067">ATP-binding</keyword>
<keyword id="KW-0203">Cytokinin biosynthesis</keyword>
<keyword id="KW-0496">Mitochondrion</keyword>
<keyword id="KW-0547">Nucleotide-binding</keyword>
<keyword id="KW-1185">Reference proteome</keyword>
<keyword id="KW-0808">Transferase</keyword>
<keyword id="KW-0809">Transit peptide</keyword>
<comment type="function">
    <text evidence="2 6 7">Involved in cytokinin biosynthesis. Catalyzes the transfer of an isopentenyl group from dimethylallyl diphosphate (DMAPP) to ATP and ADP.</text>
</comment>
<comment type="catalytic activity">
    <reaction>
        <text>dimethylallyl diphosphate + ADP = N(6)-(dimethylallyl)adenosine 5'-diphosphate + diphosphate</text>
        <dbReference type="Rhea" id="RHEA:36327"/>
        <dbReference type="ChEBI" id="CHEBI:33019"/>
        <dbReference type="ChEBI" id="CHEBI:57623"/>
        <dbReference type="ChEBI" id="CHEBI:73533"/>
        <dbReference type="ChEBI" id="CHEBI:456216"/>
        <dbReference type="EC" id="2.5.1.112"/>
    </reaction>
</comment>
<comment type="catalytic activity">
    <reaction>
        <text>dimethylallyl diphosphate + ATP = N(6)-(dimethylallyl)adenosine 5'-triphosphate + diphosphate</text>
        <dbReference type="Rhea" id="RHEA:36331"/>
        <dbReference type="ChEBI" id="CHEBI:30616"/>
        <dbReference type="ChEBI" id="CHEBI:33019"/>
        <dbReference type="ChEBI" id="CHEBI:57623"/>
        <dbReference type="ChEBI" id="CHEBI:73532"/>
        <dbReference type="EC" id="2.5.1.112"/>
    </reaction>
</comment>
<comment type="subcellular location">
    <subcellularLocation>
        <location evidence="4">Mitochondrion</location>
    </subcellularLocation>
</comment>
<comment type="tissue specificity">
    <text evidence="3 5">Expressed in both the vascular stele and the phloem companion cells of the root, in endodermis of the root elongation zone, trichomes on young leaves, and some pollen tubes.</text>
</comment>
<comment type="induction">
    <text evidence="3">Down-regulated by cytokinins and up-regulated by auxin.</text>
</comment>
<comment type="disruption phenotype">
    <text evidence="7">No visible phenotype, due the redundancy with other IPTs.</text>
</comment>
<comment type="similarity">
    <text evidence="8">Belongs to the IPP transferase family.</text>
</comment>
<evidence type="ECO:0000255" key="1"/>
<evidence type="ECO:0000269" key="2">
    <source>
    </source>
</evidence>
<evidence type="ECO:0000269" key="3">
    <source>
    </source>
</evidence>
<evidence type="ECO:0000269" key="4">
    <source>
    </source>
</evidence>
<evidence type="ECO:0000269" key="5">
    <source>
    </source>
</evidence>
<evidence type="ECO:0000269" key="6">
    <source>
    </source>
</evidence>
<evidence type="ECO:0000269" key="7">
    <source>
    </source>
</evidence>
<evidence type="ECO:0000305" key="8"/>
<feature type="transit peptide" description="Mitochondrion" evidence="1">
    <location>
        <begin position="1"/>
        <end position="40"/>
    </location>
</feature>
<feature type="chain" id="PRO_0000391075" description="Adenylate isopentenyltransferase 7, mitochondrial">
    <location>
        <begin position="41"/>
        <end position="329"/>
    </location>
</feature>
<feature type="binding site" evidence="1">
    <location>
        <begin position="41"/>
        <end position="48"/>
    </location>
    <ligand>
        <name>ATP</name>
        <dbReference type="ChEBI" id="CHEBI:30616"/>
    </ligand>
</feature>
<feature type="sequence conflict" description="In Ref. 2; BAB59033." evidence="8" ref="2">
    <original>I</original>
    <variation>V</variation>
    <location>
        <position position="37"/>
    </location>
</feature>
<feature type="sequence conflict" description="In Ref. 3; AAM65536." evidence="8" ref="3">
    <original>G</original>
    <variation>E</variation>
    <location>
        <position position="41"/>
    </location>
</feature>
<feature type="sequence conflict" description="In Ref. 3; AAM65536." evidence="8" ref="3">
    <original>N</original>
    <variation>K</variation>
    <location>
        <position position="134"/>
    </location>
</feature>
<accession>Q94ID1</accession>
<accession>Q8LA74</accession>
<accession>Q9LUG4</accession>
<sequence length="329" mass="36980">MKFSISSLKQVQPILCFKNKLSKVNVNSFLHPKEKVIFVMGATGSGKSRLAIDLATRFQGEIINSDKIQLYKGLDVLTNKVTPKECRGVPHHLLGVFDSEAGNLTATQYSRLASQAISKLSANNKLPIVAGGSNSYIEALVNHSSGFLLNNYDCCFIWVDVSLPVLNSFVSKRVDRMMEAGLLEEVREVFNPKANYSVGIRRAIGVPELHEYLRNESLVDRATKSKMLDVAVKNIKKNTEILACRQLKKIQRLHKKWKMSMHRVDATEVFLKRNVEEQDEAWENLVARPSERIVDKFYNNNNQLKNDDVEHCLAASYGGGSGSRAHNMI</sequence>
<proteinExistence type="evidence at transcript level"/>
<reference key="1">
    <citation type="journal article" date="2001" name="J. Biol. Chem.">
        <title>Identification of genes encoding adenylate isopentenyltransferase, a cytokinin biosynthesis enzyme, in Arabidopsis thaliana.</title>
        <authorList>
            <person name="Takei K."/>
            <person name="Sakakibara H."/>
            <person name="Sugiyama T."/>
        </authorList>
    </citation>
    <scope>NUCLEOTIDE SEQUENCE [MRNA]</scope>
    <scope>FUNCTION</scope>
    <scope>GENE FAMILY</scope>
    <source>
        <strain>cv. Columbia</strain>
    </source>
</reference>
<reference key="2">
    <citation type="journal article" date="2001" name="Plant Cell Physiol.">
        <title>Identification of plant cytokinin biosynthetic enzymes as dimethylallyl diphosphate:ATP/ADP isopentenyltransferases.</title>
        <authorList>
            <person name="Kakimoto T."/>
        </authorList>
    </citation>
    <scope>NUCLEOTIDE SEQUENCE [MRNA]</scope>
    <scope>GENE FAMILY</scope>
    <source>
        <strain>cv. Wassilewskija</strain>
    </source>
</reference>
<reference key="3">
    <citation type="journal article" date="2000" name="DNA Res.">
        <title>Structural analysis of Arabidopsis thaliana chromosome 3. I. Sequence features of the regions of 4,504,864 bp covered by sixty P1 and TAC clones.</title>
        <authorList>
            <person name="Sato S."/>
            <person name="Nakamura Y."/>
            <person name="Kaneko T."/>
            <person name="Katoh T."/>
            <person name="Asamizu E."/>
            <person name="Tabata S."/>
        </authorList>
    </citation>
    <scope>NUCLEOTIDE SEQUENCE [LARGE SCALE GENOMIC DNA]</scope>
    <source>
        <strain>cv. Columbia</strain>
    </source>
</reference>
<reference key="4">
    <citation type="journal article" date="2017" name="Plant J.">
        <title>Araport11: a complete reannotation of the Arabidopsis thaliana reference genome.</title>
        <authorList>
            <person name="Cheng C.Y."/>
            <person name="Krishnakumar V."/>
            <person name="Chan A.P."/>
            <person name="Thibaud-Nissen F."/>
            <person name="Schobel S."/>
            <person name="Town C.D."/>
        </authorList>
    </citation>
    <scope>GENOME REANNOTATION</scope>
    <source>
        <strain>cv. Columbia</strain>
    </source>
</reference>
<reference key="5">
    <citation type="submission" date="2002-03" db="EMBL/GenBank/DDBJ databases">
        <title>Full-length cDNA from Arabidopsis thaliana.</title>
        <authorList>
            <person name="Brover V.V."/>
            <person name="Troukhan M.E."/>
            <person name="Alexandrov N.A."/>
            <person name="Lu Y.-P."/>
            <person name="Flavell R.B."/>
            <person name="Feldmann K.A."/>
        </authorList>
    </citation>
    <scope>NUCLEOTIDE SEQUENCE [LARGE SCALE MRNA]</scope>
</reference>
<reference key="6">
    <citation type="submission" date="2006-07" db="EMBL/GenBank/DDBJ databases">
        <title>Large-scale analysis of RIKEN Arabidopsis full-length (RAFL) cDNAs.</title>
        <authorList>
            <person name="Totoki Y."/>
            <person name="Seki M."/>
            <person name="Ishida J."/>
            <person name="Nakajima M."/>
            <person name="Enju A."/>
            <person name="Kamiya A."/>
            <person name="Narusaka M."/>
            <person name="Shin-i T."/>
            <person name="Nakagawa M."/>
            <person name="Sakamoto N."/>
            <person name="Oishi K."/>
            <person name="Kohara Y."/>
            <person name="Kobayashi M."/>
            <person name="Toyoda A."/>
            <person name="Sakaki Y."/>
            <person name="Sakurai T."/>
            <person name="Iida K."/>
            <person name="Akiyama K."/>
            <person name="Satou M."/>
            <person name="Toyoda T."/>
            <person name="Konagaya A."/>
            <person name="Carninci P."/>
            <person name="Kawai J."/>
            <person name="Hayashizaki Y."/>
            <person name="Shinozaki K."/>
        </authorList>
    </citation>
    <scope>NUCLEOTIDE SEQUENCE [LARGE SCALE MRNA]</scope>
    <source>
        <strain>cv. Columbia</strain>
    </source>
</reference>
<reference key="7">
    <citation type="journal article" date="2004" name="J. Biol. Chem.">
        <title>Distinct isoprenoid origins of cis- and trans-zeatin biosyntheses in Arabidopsis.</title>
        <authorList>
            <person name="Kasahara H."/>
            <person name="Takei K."/>
            <person name="Ueda N."/>
            <person name="Hishiyama S."/>
            <person name="Yamaya T."/>
            <person name="Kamiya Y."/>
            <person name="Yamaguchi S."/>
            <person name="Sakakibara H."/>
        </authorList>
    </citation>
    <scope>SUBCELLULAR LOCATION</scope>
</reference>
<reference key="8">
    <citation type="journal article" date="2004" name="Plant Cell Physiol.">
        <title>AtIPT3 is a key determinant of nitrate-dependent cytokinin biosynthesis in Arabidopsis.</title>
        <authorList>
            <person name="Takei K."/>
            <person name="Ueda N."/>
            <person name="Aoki K."/>
            <person name="Kuromori T."/>
            <person name="Hirayama T."/>
            <person name="Shinozaki K."/>
            <person name="Yamaya T."/>
            <person name="Sakakibara H."/>
        </authorList>
    </citation>
    <scope>TISSUE SPECIFICITY</scope>
</reference>
<reference key="9">
    <citation type="journal article" date="2004" name="Plant J.">
        <title>Expression of cytokinin biosynthetic isopentenyltransferase genes in Arabidopsis: tissue specificity and regulation by auxin, cytokinin, and nitrate.</title>
        <authorList>
            <person name="Miyawaki K."/>
            <person name="Matsumoto-Kitano M."/>
            <person name="Kakimoto T."/>
        </authorList>
    </citation>
    <scope>TISSUE SPECIFICITY</scope>
    <scope>INDUCTION</scope>
</reference>
<reference key="10">
    <citation type="journal article" date="2005" name="Proc. Natl. Acad. Sci. U.S.A.">
        <title>Agrobacterium tumefaciens increases cytokinin production in plastids by modifying the biosynthetic pathway in the host plant.</title>
        <authorList>
            <person name="Sakakibara H."/>
            <person name="Kasahara H."/>
            <person name="Ueda N."/>
            <person name="Kojima M."/>
            <person name="Takei K."/>
            <person name="Hishiyama S."/>
            <person name="Asami T."/>
            <person name="Okada K."/>
            <person name="Kamiya Y."/>
            <person name="Yamaya T."/>
            <person name="Yamaguchi S."/>
        </authorList>
    </citation>
    <scope>FUNCTION</scope>
</reference>
<reference key="11">
    <citation type="journal article" date="2006" name="Proc. Natl. Acad. Sci. U.S.A.">
        <title>Roles of Arabidopsis ATP/ADP isopentenyltransferases and tRNA isopentenyltransferases in cytokinin biosynthesis.</title>
        <authorList>
            <person name="Miyawaki K."/>
            <person name="Tarkowski P."/>
            <person name="Matsumoto-Kitano M."/>
            <person name="Kato T."/>
            <person name="Sato S."/>
            <person name="Tarkowska D."/>
            <person name="Tabata S."/>
            <person name="Sandberg G."/>
            <person name="Kakimoto T."/>
        </authorList>
    </citation>
    <scope>FUNCTION</scope>
    <scope>DISRUPTION PHENOTYPE</scope>
</reference>